<evidence type="ECO:0000255" key="1">
    <source>
        <dbReference type="HAMAP-Rule" id="MF_00170"/>
    </source>
</evidence>
<gene>
    <name evidence="1" type="primary">rpiA</name>
    <name type="ordered locus">LAR_0286</name>
</gene>
<comment type="function">
    <text evidence="1">Catalyzes the reversible conversion of ribose-5-phosphate to ribulose 5-phosphate.</text>
</comment>
<comment type="catalytic activity">
    <reaction evidence="1">
        <text>aldehydo-D-ribose 5-phosphate = D-ribulose 5-phosphate</text>
        <dbReference type="Rhea" id="RHEA:14657"/>
        <dbReference type="ChEBI" id="CHEBI:58121"/>
        <dbReference type="ChEBI" id="CHEBI:58273"/>
        <dbReference type="EC" id="5.3.1.6"/>
    </reaction>
</comment>
<comment type="pathway">
    <text evidence="1">Carbohydrate degradation; pentose phosphate pathway; D-ribose 5-phosphate from D-ribulose 5-phosphate (non-oxidative stage): step 1/1.</text>
</comment>
<comment type="subunit">
    <text evidence="1">Homodimer.</text>
</comment>
<comment type="similarity">
    <text evidence="1">Belongs to the ribose 5-phosphate isomerase family.</text>
</comment>
<keyword id="KW-0413">Isomerase</keyword>
<proteinExistence type="inferred from homology"/>
<dbReference type="EC" id="5.3.1.6" evidence="1"/>
<dbReference type="EMBL" id="AP007281">
    <property type="protein sequence ID" value="BAG24802.1"/>
    <property type="molecule type" value="Genomic_DNA"/>
</dbReference>
<dbReference type="RefSeq" id="WP_003666281.1">
    <property type="nucleotide sequence ID" value="NC_010609.1"/>
</dbReference>
<dbReference type="SMR" id="B2G5S0"/>
<dbReference type="KEGG" id="lrf:LAR_0286"/>
<dbReference type="HOGENOM" id="CLU_056590_1_0_9"/>
<dbReference type="UniPathway" id="UPA00115">
    <property type="reaction ID" value="UER00412"/>
</dbReference>
<dbReference type="GO" id="GO:0004751">
    <property type="term" value="F:ribose-5-phosphate isomerase activity"/>
    <property type="evidence" value="ECO:0007669"/>
    <property type="project" value="UniProtKB-UniRule"/>
</dbReference>
<dbReference type="GO" id="GO:0009052">
    <property type="term" value="P:pentose-phosphate shunt, non-oxidative branch"/>
    <property type="evidence" value="ECO:0007669"/>
    <property type="project" value="UniProtKB-UniRule"/>
</dbReference>
<dbReference type="CDD" id="cd01398">
    <property type="entry name" value="RPI_A"/>
    <property type="match status" value="1"/>
</dbReference>
<dbReference type="FunFam" id="3.40.50.1360:FF:000001">
    <property type="entry name" value="Ribose-5-phosphate isomerase A"/>
    <property type="match status" value="1"/>
</dbReference>
<dbReference type="Gene3D" id="3.30.70.260">
    <property type="match status" value="1"/>
</dbReference>
<dbReference type="Gene3D" id="3.40.50.1360">
    <property type="match status" value="1"/>
</dbReference>
<dbReference type="HAMAP" id="MF_00170">
    <property type="entry name" value="Rib_5P_isom_A"/>
    <property type="match status" value="1"/>
</dbReference>
<dbReference type="InterPro" id="IPR037171">
    <property type="entry name" value="NagB/RpiA_transferase-like"/>
</dbReference>
<dbReference type="InterPro" id="IPR050262">
    <property type="entry name" value="Ribose-5P_isomerase"/>
</dbReference>
<dbReference type="InterPro" id="IPR020672">
    <property type="entry name" value="Ribose5P_isomerase_typA_subgr"/>
</dbReference>
<dbReference type="InterPro" id="IPR004788">
    <property type="entry name" value="Ribose5P_isomerase_type_A"/>
</dbReference>
<dbReference type="NCBIfam" id="NF001924">
    <property type="entry name" value="PRK00702.1"/>
    <property type="match status" value="1"/>
</dbReference>
<dbReference type="NCBIfam" id="TIGR00021">
    <property type="entry name" value="rpiA"/>
    <property type="match status" value="1"/>
</dbReference>
<dbReference type="PANTHER" id="PTHR43748">
    <property type="entry name" value="RIBOSE-5-PHOSPHATE ISOMERASE 3, CHLOROPLASTIC-RELATED"/>
    <property type="match status" value="1"/>
</dbReference>
<dbReference type="PANTHER" id="PTHR43748:SF3">
    <property type="entry name" value="RIBOSE-5-PHOSPHATE ISOMERASE 3, CHLOROPLASTIC-RELATED"/>
    <property type="match status" value="1"/>
</dbReference>
<dbReference type="Pfam" id="PF06026">
    <property type="entry name" value="Rib_5-P_isom_A"/>
    <property type="match status" value="1"/>
</dbReference>
<dbReference type="SUPFAM" id="SSF75445">
    <property type="entry name" value="D-ribose-5-phosphate isomerase (RpiA), lid domain"/>
    <property type="match status" value="1"/>
</dbReference>
<dbReference type="SUPFAM" id="SSF100950">
    <property type="entry name" value="NagB/RpiA/CoA transferase-like"/>
    <property type="match status" value="1"/>
</dbReference>
<accession>B2G5S0</accession>
<protein>
    <recommendedName>
        <fullName evidence="1">Ribose-5-phosphate isomerase A</fullName>
        <ecNumber evidence="1">5.3.1.6</ecNumber>
    </recommendedName>
    <alternativeName>
        <fullName evidence="1">Phosphoriboisomerase A</fullName>
        <shortName evidence="1">PRI</shortName>
    </alternativeName>
</protein>
<feature type="chain" id="PRO_1000097671" description="Ribose-5-phosphate isomerase A">
    <location>
        <begin position="1"/>
        <end position="227"/>
    </location>
</feature>
<feature type="active site" description="Proton acceptor" evidence="1">
    <location>
        <position position="107"/>
    </location>
</feature>
<feature type="binding site" evidence="1">
    <location>
        <begin position="28"/>
        <end position="31"/>
    </location>
    <ligand>
        <name>substrate</name>
    </ligand>
</feature>
<feature type="binding site" evidence="1">
    <location>
        <begin position="85"/>
        <end position="88"/>
    </location>
    <ligand>
        <name>substrate</name>
    </ligand>
</feature>
<feature type="binding site" evidence="1">
    <location>
        <begin position="98"/>
        <end position="101"/>
    </location>
    <ligand>
        <name>substrate</name>
    </ligand>
</feature>
<feature type="binding site" evidence="1">
    <location>
        <position position="125"/>
    </location>
    <ligand>
        <name>substrate</name>
    </ligand>
</feature>
<name>RPIA_LIMRJ</name>
<organism>
    <name type="scientific">Limosilactobacillus reuteri subsp. reuteri (strain JCM 1112)</name>
    <name type="common">Lactobacillus reuteri</name>
    <dbReference type="NCBI Taxonomy" id="557433"/>
    <lineage>
        <taxon>Bacteria</taxon>
        <taxon>Bacillati</taxon>
        <taxon>Bacillota</taxon>
        <taxon>Bacilli</taxon>
        <taxon>Lactobacillales</taxon>
        <taxon>Lactobacillaceae</taxon>
        <taxon>Limosilactobacillus</taxon>
    </lineage>
</organism>
<sequence length="227" mass="25037">MDQNALKEQTGKESVKYIKSGMIVGLGTGSTVKYMVDELGKQVQEGKIKDIIGVTTSNRTAKQARDLGITIKDIDDVDHIDLTIDGADEISDDFQGIKGGGGALLWEKIVANASNKVMWIVDESKLVHKLGAFPLPVEVIPFGSQHVFDRLEKKGYKPTWRMDGDKKFRTDENNYIIDLHLGEIDDPKALADELIHMVGIVETGLFLNRVNDVIVGTPEGPKVLHAR</sequence>
<reference key="1">
    <citation type="journal article" date="2008" name="DNA Res.">
        <title>Comparative genome analysis of Lactobacillus reuteri and Lactobacillus fermentum reveal a genomic island for reuterin and cobalamin production.</title>
        <authorList>
            <person name="Morita H."/>
            <person name="Toh H."/>
            <person name="Fukuda S."/>
            <person name="Horikawa H."/>
            <person name="Oshima K."/>
            <person name="Suzuki T."/>
            <person name="Murakami M."/>
            <person name="Hisamatsu S."/>
            <person name="Kato Y."/>
            <person name="Takizawa T."/>
            <person name="Fukuoka H."/>
            <person name="Yoshimura T."/>
            <person name="Itoh K."/>
            <person name="O'Sullivan D.J."/>
            <person name="McKay L.L."/>
            <person name="Ohno H."/>
            <person name="Kikuchi J."/>
            <person name="Masaoka T."/>
            <person name="Hattori M."/>
        </authorList>
    </citation>
    <scope>NUCLEOTIDE SEQUENCE [LARGE SCALE GENOMIC DNA]</scope>
    <source>
        <strain>JCM 1112</strain>
    </source>
</reference>